<reference key="1">
    <citation type="submission" date="2007-03" db="EMBL/GenBank/DDBJ databases">
        <title>Complete sequence of chromosome 1 of Burkholderia vietnamiensis G4.</title>
        <authorList>
            <consortium name="US DOE Joint Genome Institute"/>
            <person name="Copeland A."/>
            <person name="Lucas S."/>
            <person name="Lapidus A."/>
            <person name="Barry K."/>
            <person name="Detter J.C."/>
            <person name="Glavina del Rio T."/>
            <person name="Hammon N."/>
            <person name="Israni S."/>
            <person name="Dalin E."/>
            <person name="Tice H."/>
            <person name="Pitluck S."/>
            <person name="Chain P."/>
            <person name="Malfatti S."/>
            <person name="Shin M."/>
            <person name="Vergez L."/>
            <person name="Schmutz J."/>
            <person name="Larimer F."/>
            <person name="Land M."/>
            <person name="Hauser L."/>
            <person name="Kyrpides N."/>
            <person name="Tiedje J."/>
            <person name="Richardson P."/>
        </authorList>
    </citation>
    <scope>NUCLEOTIDE SEQUENCE [LARGE SCALE GENOMIC DNA]</scope>
    <source>
        <strain>G4 / LMG 22486</strain>
    </source>
</reference>
<comment type="function">
    <text evidence="1">One of the primary rRNA binding proteins, this protein initially binds near the 5'-end of the 23S rRNA. It is important during the early stages of 50S assembly. It makes multiple contacts with different domains of the 23S rRNA in the assembled 50S subunit and ribosome.</text>
</comment>
<comment type="function">
    <text evidence="1">Forms part of the polypeptide exit tunnel.</text>
</comment>
<comment type="subunit">
    <text evidence="1">Part of the 50S ribosomal subunit.</text>
</comment>
<comment type="similarity">
    <text evidence="1">Belongs to the universal ribosomal protein uL4 family.</text>
</comment>
<name>RL4_BURVG</name>
<proteinExistence type="inferred from homology"/>
<keyword id="KW-0687">Ribonucleoprotein</keyword>
<keyword id="KW-0689">Ribosomal protein</keyword>
<keyword id="KW-0694">RNA-binding</keyword>
<keyword id="KW-0699">rRNA-binding</keyword>
<organism>
    <name type="scientific">Burkholderia vietnamiensis (strain G4 / LMG 22486)</name>
    <name type="common">Burkholderia cepacia (strain R1808)</name>
    <dbReference type="NCBI Taxonomy" id="269482"/>
    <lineage>
        <taxon>Bacteria</taxon>
        <taxon>Pseudomonadati</taxon>
        <taxon>Pseudomonadota</taxon>
        <taxon>Betaproteobacteria</taxon>
        <taxon>Burkholderiales</taxon>
        <taxon>Burkholderiaceae</taxon>
        <taxon>Burkholderia</taxon>
        <taxon>Burkholderia cepacia complex</taxon>
    </lineage>
</organism>
<protein>
    <recommendedName>
        <fullName evidence="1">Large ribosomal subunit protein uL4</fullName>
    </recommendedName>
    <alternativeName>
        <fullName evidence="3">50S ribosomal protein L4</fullName>
    </alternativeName>
</protein>
<accession>A4JAP1</accession>
<gene>
    <name evidence="1" type="primary">rplD</name>
    <name type="ordered locus">Bcep1808_0331</name>
</gene>
<sequence>MELKLLNENGQEGAVVNASDVVFGRDYNEALIHQVVVAYQANARQGNRAQKDREQVKHTTKKPWRQKGTGRARAGMSSSPLWRGGGRIFPNSPEENFSHKVNKKMHRAGLCSIFSQLAREGRLSVVEDIILEAPKTKLLADKFKTMGLDSVLIITDTVDENLYLASRNLPHVAIVEPRYADPLSLIYFKKVLVTKAAVAQIEELLS</sequence>
<dbReference type="EMBL" id="CP000614">
    <property type="protein sequence ID" value="ABO53344.1"/>
    <property type="molecule type" value="Genomic_DNA"/>
</dbReference>
<dbReference type="SMR" id="A4JAP1"/>
<dbReference type="KEGG" id="bvi:Bcep1808_0331"/>
<dbReference type="eggNOG" id="COG0088">
    <property type="taxonomic scope" value="Bacteria"/>
</dbReference>
<dbReference type="HOGENOM" id="CLU_041575_5_2_4"/>
<dbReference type="Proteomes" id="UP000002287">
    <property type="component" value="Chromosome 1"/>
</dbReference>
<dbReference type="GO" id="GO:1990904">
    <property type="term" value="C:ribonucleoprotein complex"/>
    <property type="evidence" value="ECO:0007669"/>
    <property type="project" value="UniProtKB-KW"/>
</dbReference>
<dbReference type="GO" id="GO:0005840">
    <property type="term" value="C:ribosome"/>
    <property type="evidence" value="ECO:0007669"/>
    <property type="project" value="UniProtKB-KW"/>
</dbReference>
<dbReference type="GO" id="GO:0019843">
    <property type="term" value="F:rRNA binding"/>
    <property type="evidence" value="ECO:0007669"/>
    <property type="project" value="UniProtKB-UniRule"/>
</dbReference>
<dbReference type="GO" id="GO:0003735">
    <property type="term" value="F:structural constituent of ribosome"/>
    <property type="evidence" value="ECO:0007669"/>
    <property type="project" value="InterPro"/>
</dbReference>
<dbReference type="GO" id="GO:0006412">
    <property type="term" value="P:translation"/>
    <property type="evidence" value="ECO:0007669"/>
    <property type="project" value="UniProtKB-UniRule"/>
</dbReference>
<dbReference type="Gene3D" id="3.40.1370.10">
    <property type="match status" value="1"/>
</dbReference>
<dbReference type="HAMAP" id="MF_01328_B">
    <property type="entry name" value="Ribosomal_uL4_B"/>
    <property type="match status" value="1"/>
</dbReference>
<dbReference type="InterPro" id="IPR002136">
    <property type="entry name" value="Ribosomal_uL4"/>
</dbReference>
<dbReference type="InterPro" id="IPR013005">
    <property type="entry name" value="Ribosomal_uL4-like"/>
</dbReference>
<dbReference type="InterPro" id="IPR023574">
    <property type="entry name" value="Ribosomal_uL4_dom_sf"/>
</dbReference>
<dbReference type="NCBIfam" id="TIGR03953">
    <property type="entry name" value="rplD_bact"/>
    <property type="match status" value="1"/>
</dbReference>
<dbReference type="PANTHER" id="PTHR10746">
    <property type="entry name" value="50S RIBOSOMAL PROTEIN L4"/>
    <property type="match status" value="1"/>
</dbReference>
<dbReference type="PANTHER" id="PTHR10746:SF6">
    <property type="entry name" value="LARGE RIBOSOMAL SUBUNIT PROTEIN UL4M"/>
    <property type="match status" value="1"/>
</dbReference>
<dbReference type="Pfam" id="PF00573">
    <property type="entry name" value="Ribosomal_L4"/>
    <property type="match status" value="1"/>
</dbReference>
<dbReference type="SUPFAM" id="SSF52166">
    <property type="entry name" value="Ribosomal protein L4"/>
    <property type="match status" value="1"/>
</dbReference>
<evidence type="ECO:0000255" key="1">
    <source>
        <dbReference type="HAMAP-Rule" id="MF_01328"/>
    </source>
</evidence>
<evidence type="ECO:0000256" key="2">
    <source>
        <dbReference type="SAM" id="MobiDB-lite"/>
    </source>
</evidence>
<evidence type="ECO:0000305" key="3"/>
<feature type="chain" id="PRO_1000052372" description="Large ribosomal subunit protein uL4">
    <location>
        <begin position="1"/>
        <end position="206"/>
    </location>
</feature>
<feature type="region of interest" description="Disordered" evidence="2">
    <location>
        <begin position="45"/>
        <end position="78"/>
    </location>
</feature>
<feature type="compositionally biased region" description="Basic residues" evidence="2">
    <location>
        <begin position="58"/>
        <end position="70"/>
    </location>
</feature>